<accession>Q4AAD0</accession>
<dbReference type="EC" id="3.1.1.29" evidence="1"/>
<dbReference type="EMBL" id="AE017243">
    <property type="protein sequence ID" value="AAZ44291.1"/>
    <property type="molecule type" value="Genomic_DNA"/>
</dbReference>
<dbReference type="RefSeq" id="WP_011206014.1">
    <property type="nucleotide sequence ID" value="NC_007295.1"/>
</dbReference>
<dbReference type="SMR" id="Q4AAD0"/>
<dbReference type="GeneID" id="41334502"/>
<dbReference type="KEGG" id="mhj:MHJ_0200"/>
<dbReference type="eggNOG" id="COG0193">
    <property type="taxonomic scope" value="Bacteria"/>
</dbReference>
<dbReference type="HOGENOM" id="CLU_062456_4_1_14"/>
<dbReference type="OrthoDB" id="9800507at2"/>
<dbReference type="Proteomes" id="UP000000548">
    <property type="component" value="Chromosome"/>
</dbReference>
<dbReference type="GO" id="GO:0005737">
    <property type="term" value="C:cytoplasm"/>
    <property type="evidence" value="ECO:0007669"/>
    <property type="project" value="UniProtKB-SubCell"/>
</dbReference>
<dbReference type="GO" id="GO:0004045">
    <property type="term" value="F:peptidyl-tRNA hydrolase activity"/>
    <property type="evidence" value="ECO:0007669"/>
    <property type="project" value="UniProtKB-UniRule"/>
</dbReference>
<dbReference type="GO" id="GO:0000049">
    <property type="term" value="F:tRNA binding"/>
    <property type="evidence" value="ECO:0007669"/>
    <property type="project" value="UniProtKB-UniRule"/>
</dbReference>
<dbReference type="GO" id="GO:0006515">
    <property type="term" value="P:protein quality control for misfolded or incompletely synthesized proteins"/>
    <property type="evidence" value="ECO:0007669"/>
    <property type="project" value="UniProtKB-UniRule"/>
</dbReference>
<dbReference type="GO" id="GO:0072344">
    <property type="term" value="P:rescue of stalled ribosome"/>
    <property type="evidence" value="ECO:0007669"/>
    <property type="project" value="UniProtKB-UniRule"/>
</dbReference>
<dbReference type="CDD" id="cd00462">
    <property type="entry name" value="PTH"/>
    <property type="match status" value="1"/>
</dbReference>
<dbReference type="Gene3D" id="3.40.50.1470">
    <property type="entry name" value="Peptidyl-tRNA hydrolase"/>
    <property type="match status" value="1"/>
</dbReference>
<dbReference type="HAMAP" id="MF_00083">
    <property type="entry name" value="Pept_tRNA_hydro_bact"/>
    <property type="match status" value="1"/>
</dbReference>
<dbReference type="InterPro" id="IPR001328">
    <property type="entry name" value="Pept_tRNA_hydro"/>
</dbReference>
<dbReference type="InterPro" id="IPR018171">
    <property type="entry name" value="Pept_tRNA_hydro_CS"/>
</dbReference>
<dbReference type="InterPro" id="IPR036416">
    <property type="entry name" value="Pept_tRNA_hydro_sf"/>
</dbReference>
<dbReference type="NCBIfam" id="TIGR00447">
    <property type="entry name" value="pth"/>
    <property type="match status" value="1"/>
</dbReference>
<dbReference type="PANTHER" id="PTHR17224">
    <property type="entry name" value="PEPTIDYL-TRNA HYDROLASE"/>
    <property type="match status" value="1"/>
</dbReference>
<dbReference type="PANTHER" id="PTHR17224:SF1">
    <property type="entry name" value="PEPTIDYL-TRNA HYDROLASE"/>
    <property type="match status" value="1"/>
</dbReference>
<dbReference type="Pfam" id="PF01195">
    <property type="entry name" value="Pept_tRNA_hydro"/>
    <property type="match status" value="1"/>
</dbReference>
<dbReference type="SUPFAM" id="SSF53178">
    <property type="entry name" value="Peptidyl-tRNA hydrolase-like"/>
    <property type="match status" value="1"/>
</dbReference>
<dbReference type="PROSITE" id="PS01195">
    <property type="entry name" value="PEPT_TRNA_HYDROL_1"/>
    <property type="match status" value="1"/>
</dbReference>
<reference key="1">
    <citation type="journal article" date="2005" name="J. Bacteriol.">
        <title>Swine and poultry pathogens: the complete genome sequences of two strains of Mycoplasma hyopneumoniae and a strain of Mycoplasma synoviae.</title>
        <authorList>
            <person name="Vasconcelos A.T.R."/>
            <person name="Ferreira H.B."/>
            <person name="Bizarro C.V."/>
            <person name="Bonatto S.L."/>
            <person name="Carvalho M.O."/>
            <person name="Pinto P.M."/>
            <person name="Almeida D.F."/>
            <person name="Almeida L.G.P."/>
            <person name="Almeida R."/>
            <person name="Alves-Junior L."/>
            <person name="Assuncao E.N."/>
            <person name="Azevedo V.A.C."/>
            <person name="Bogo M.R."/>
            <person name="Brigido M.M."/>
            <person name="Brocchi M."/>
            <person name="Burity H.A."/>
            <person name="Camargo A.A."/>
            <person name="Camargo S.S."/>
            <person name="Carepo M.S."/>
            <person name="Carraro D.M."/>
            <person name="de Mattos Cascardo J.C."/>
            <person name="Castro L.A."/>
            <person name="Cavalcanti G."/>
            <person name="Chemale G."/>
            <person name="Collevatti R.G."/>
            <person name="Cunha C.W."/>
            <person name="Dallagiovanna B."/>
            <person name="Dambros B.P."/>
            <person name="Dellagostin O.A."/>
            <person name="Falcao C."/>
            <person name="Fantinatti-Garboggini F."/>
            <person name="Felipe M.S.S."/>
            <person name="Fiorentin L."/>
            <person name="Franco G.R."/>
            <person name="Freitas N.S.A."/>
            <person name="Frias D."/>
            <person name="Grangeiro T.B."/>
            <person name="Grisard E.C."/>
            <person name="Guimaraes C.T."/>
            <person name="Hungria M."/>
            <person name="Jardim S.N."/>
            <person name="Krieger M.A."/>
            <person name="Laurino J.P."/>
            <person name="Lima L.F.A."/>
            <person name="Lopes M.I."/>
            <person name="Loreto E.L.S."/>
            <person name="Madeira H.M.F."/>
            <person name="Manfio G.P."/>
            <person name="Maranhao A.Q."/>
            <person name="Martinkovics C.T."/>
            <person name="Medeiros S.R.B."/>
            <person name="Moreira M.A.M."/>
            <person name="Neiva M."/>
            <person name="Ramalho-Neto C.E."/>
            <person name="Nicolas M.F."/>
            <person name="Oliveira S.C."/>
            <person name="Paixao R.F.C."/>
            <person name="Pedrosa F.O."/>
            <person name="Pena S.D.J."/>
            <person name="Pereira M."/>
            <person name="Pereira-Ferrari L."/>
            <person name="Piffer I."/>
            <person name="Pinto L.S."/>
            <person name="Potrich D.P."/>
            <person name="Salim A.C.M."/>
            <person name="Santos F.R."/>
            <person name="Schmitt R."/>
            <person name="Schneider M.P.C."/>
            <person name="Schrank A."/>
            <person name="Schrank I.S."/>
            <person name="Schuck A.F."/>
            <person name="Seuanez H.N."/>
            <person name="Silva D.W."/>
            <person name="Silva R."/>
            <person name="Silva S.C."/>
            <person name="Soares C.M.A."/>
            <person name="Souza K.R.L."/>
            <person name="Souza R.C."/>
            <person name="Staats C.C."/>
            <person name="Steffens M.B.R."/>
            <person name="Teixeira S.M.R."/>
            <person name="Urmenyi T.P."/>
            <person name="Vainstein M.H."/>
            <person name="Zuccherato L.W."/>
            <person name="Simpson A.J.G."/>
            <person name="Zaha A."/>
        </authorList>
    </citation>
    <scope>NUCLEOTIDE SEQUENCE [LARGE SCALE GENOMIC DNA]</scope>
    <source>
        <strain>J / ATCC 25934 / NCTC 10110</strain>
    </source>
</reference>
<comment type="function">
    <text evidence="1">Hydrolyzes ribosome-free peptidyl-tRNAs (with 1 or more amino acids incorporated), which drop off the ribosome during protein synthesis, or as a result of ribosome stalling.</text>
</comment>
<comment type="function">
    <text evidence="1">Catalyzes the release of premature peptidyl moieties from peptidyl-tRNA molecules trapped in stalled 50S ribosomal subunits, and thus maintains levels of free tRNAs and 50S ribosomes.</text>
</comment>
<comment type="catalytic activity">
    <reaction evidence="1">
        <text>an N-acyl-L-alpha-aminoacyl-tRNA + H2O = an N-acyl-L-amino acid + a tRNA + H(+)</text>
        <dbReference type="Rhea" id="RHEA:54448"/>
        <dbReference type="Rhea" id="RHEA-COMP:10123"/>
        <dbReference type="Rhea" id="RHEA-COMP:13883"/>
        <dbReference type="ChEBI" id="CHEBI:15377"/>
        <dbReference type="ChEBI" id="CHEBI:15378"/>
        <dbReference type="ChEBI" id="CHEBI:59874"/>
        <dbReference type="ChEBI" id="CHEBI:78442"/>
        <dbReference type="ChEBI" id="CHEBI:138191"/>
        <dbReference type="EC" id="3.1.1.29"/>
    </reaction>
</comment>
<comment type="subunit">
    <text evidence="1">Monomer.</text>
</comment>
<comment type="subcellular location">
    <subcellularLocation>
        <location evidence="1">Cytoplasm</location>
    </subcellularLocation>
</comment>
<comment type="similarity">
    <text evidence="1">Belongs to the PTH family.</text>
</comment>
<organism>
    <name type="scientific">Mesomycoplasma hyopneumoniae (strain J / ATCC 25934 / NCTC 10110)</name>
    <name type="common">Mycoplasma hyopneumoniae</name>
    <dbReference type="NCBI Taxonomy" id="262719"/>
    <lineage>
        <taxon>Bacteria</taxon>
        <taxon>Bacillati</taxon>
        <taxon>Mycoplasmatota</taxon>
        <taxon>Mycoplasmoidales</taxon>
        <taxon>Metamycoplasmataceae</taxon>
        <taxon>Mesomycoplasma</taxon>
    </lineage>
</organism>
<gene>
    <name evidence="1" type="primary">pth</name>
    <name type="ordered locus">MHJ_0200</name>
</gene>
<name>PTH_MESHJ</name>
<keyword id="KW-0963">Cytoplasm</keyword>
<keyword id="KW-0378">Hydrolase</keyword>
<keyword id="KW-0694">RNA-binding</keyword>
<keyword id="KW-0820">tRNA-binding</keyword>
<evidence type="ECO:0000255" key="1">
    <source>
        <dbReference type="HAMAP-Rule" id="MF_00083"/>
    </source>
</evidence>
<sequence length="184" mass="20744">MKLIVGLGNPGEKYAKTKHNVGYWVLDLLAEKLALSFDQKTENGIYVKQPDFILAKPTTFMNKSGDFVEELIKFYKINTQDLMIIYDDMNFEVGQAAIKTTGSAGGQRGMAHIIEKCKTKEIKRLKIGISRGENAKEYVLSPFLPKDNAKIKLVIEEAANILIFYLSNSFITTIEKFNANKNKV</sequence>
<feature type="chain" id="PRO_0000264062" description="Peptidyl-tRNA hydrolase">
    <location>
        <begin position="1"/>
        <end position="184"/>
    </location>
</feature>
<feature type="active site" description="Proton acceptor" evidence="1">
    <location>
        <position position="19"/>
    </location>
</feature>
<feature type="binding site" evidence="1">
    <location>
        <position position="14"/>
    </location>
    <ligand>
        <name>tRNA</name>
        <dbReference type="ChEBI" id="CHEBI:17843"/>
    </ligand>
</feature>
<feature type="binding site" evidence="1">
    <location>
        <position position="60"/>
    </location>
    <ligand>
        <name>tRNA</name>
        <dbReference type="ChEBI" id="CHEBI:17843"/>
    </ligand>
</feature>
<feature type="binding site" evidence="1">
    <location>
        <position position="62"/>
    </location>
    <ligand>
        <name>tRNA</name>
        <dbReference type="ChEBI" id="CHEBI:17843"/>
    </ligand>
</feature>
<feature type="site" description="Discriminates between blocked and unblocked aminoacyl-tRNA" evidence="1">
    <location>
        <position position="9"/>
    </location>
</feature>
<feature type="site" description="Stabilizes the basic form of H active site to accept a proton" evidence="1">
    <location>
        <position position="87"/>
    </location>
</feature>
<proteinExistence type="inferred from homology"/>
<protein>
    <recommendedName>
        <fullName evidence="1">Peptidyl-tRNA hydrolase</fullName>
        <shortName evidence="1">Pth</shortName>
        <ecNumber evidence="1">3.1.1.29</ecNumber>
    </recommendedName>
</protein>